<organism>
    <name type="scientific">Mycobacterium bovis (strain BCG / Pasteur 1173P2)</name>
    <dbReference type="NCBI Taxonomy" id="410289"/>
    <lineage>
        <taxon>Bacteria</taxon>
        <taxon>Bacillati</taxon>
        <taxon>Actinomycetota</taxon>
        <taxon>Actinomycetes</taxon>
        <taxon>Mycobacteriales</taxon>
        <taxon>Mycobacteriaceae</taxon>
        <taxon>Mycobacterium</taxon>
        <taxon>Mycobacterium tuberculosis complex</taxon>
    </lineage>
</organism>
<protein>
    <recommendedName>
        <fullName evidence="1">NAD-capped RNA hydrolase NudC</fullName>
        <shortName evidence="1">DeNADding enzyme NudC</shortName>
        <ecNumber evidence="1">3.6.1.-</ecNumber>
    </recommendedName>
    <alternativeName>
        <fullName evidence="1">NADH pyrophosphatase</fullName>
        <ecNumber evidence="1">3.6.1.22</ecNumber>
    </alternativeName>
</protein>
<reference key="1">
    <citation type="journal article" date="2007" name="Proc. Natl. Acad. Sci. U.S.A.">
        <title>Genome plasticity of BCG and impact on vaccine efficacy.</title>
        <authorList>
            <person name="Brosch R."/>
            <person name="Gordon S.V."/>
            <person name="Garnier T."/>
            <person name="Eiglmeier K."/>
            <person name="Frigui W."/>
            <person name="Valenti P."/>
            <person name="Dos Santos S."/>
            <person name="Duthoy S."/>
            <person name="Lacroix C."/>
            <person name="Garcia-Pelayo C."/>
            <person name="Inwald J.K."/>
            <person name="Golby P."/>
            <person name="Garcia J.N."/>
            <person name="Hewinson R.G."/>
            <person name="Behr M.A."/>
            <person name="Quail M.A."/>
            <person name="Churcher C."/>
            <person name="Barrell B.G."/>
            <person name="Parkhill J."/>
            <person name="Cole S.T."/>
        </authorList>
    </citation>
    <scope>NUCLEOTIDE SEQUENCE [LARGE SCALE GENOMIC DNA]</scope>
    <source>
        <strain>BCG / Pasteur 1173P2</strain>
    </source>
</reference>
<feature type="chain" id="PRO_1000021909" description="NAD-capped RNA hydrolase NudC">
    <location>
        <begin position="1"/>
        <end position="313"/>
    </location>
</feature>
<feature type="domain" description="Nudix hydrolase" evidence="1">
    <location>
        <begin position="168"/>
        <end position="293"/>
    </location>
</feature>
<feature type="short sequence motif" description="Nudix box" evidence="1">
    <location>
        <begin position="203"/>
        <end position="224"/>
    </location>
</feature>
<feature type="binding site" evidence="1">
    <location>
        <position position="111"/>
    </location>
    <ligand>
        <name>substrate</name>
    </ligand>
</feature>
<feature type="binding site" evidence="1">
    <location>
        <position position="202"/>
    </location>
    <ligand>
        <name>a divalent metal cation</name>
        <dbReference type="ChEBI" id="CHEBI:60240"/>
        <label>1</label>
    </ligand>
</feature>
<feature type="binding site" evidence="1">
    <location>
        <position position="218"/>
    </location>
    <ligand>
        <name>a divalent metal cation</name>
        <dbReference type="ChEBI" id="CHEBI:60240"/>
        <label>2</label>
    </ligand>
</feature>
<feature type="binding site" evidence="1">
    <location>
        <position position="218"/>
    </location>
    <ligand>
        <name>a divalent metal cation</name>
        <dbReference type="ChEBI" id="CHEBI:60240"/>
        <label>3</label>
    </ligand>
</feature>
<feature type="binding site" evidence="1">
    <location>
        <position position="222"/>
    </location>
    <ligand>
        <name>a divalent metal cation</name>
        <dbReference type="ChEBI" id="CHEBI:60240"/>
        <label>1</label>
    </ligand>
</feature>
<feature type="binding site" evidence="1">
    <location>
        <position position="222"/>
    </location>
    <ligand>
        <name>a divalent metal cation</name>
        <dbReference type="ChEBI" id="CHEBI:60240"/>
        <label>3</label>
    </ligand>
</feature>
<feature type="binding site" evidence="1">
    <location>
        <begin position="236"/>
        <end position="243"/>
    </location>
    <ligand>
        <name>substrate</name>
    </ligand>
</feature>
<feature type="binding site" evidence="1">
    <location>
        <position position="264"/>
    </location>
    <ligand>
        <name>a divalent metal cation</name>
        <dbReference type="ChEBI" id="CHEBI:60240"/>
        <label>1</label>
    </ligand>
</feature>
<feature type="binding site" evidence="1">
    <location>
        <position position="264"/>
    </location>
    <ligand>
        <name>a divalent metal cation</name>
        <dbReference type="ChEBI" id="CHEBI:60240"/>
        <label>3</label>
    </ligand>
</feature>
<name>NUDC_MYCBP</name>
<gene>
    <name evidence="1" type="primary">nudC</name>
    <name type="ordered locus">BCG_3224c</name>
</gene>
<evidence type="ECO:0000255" key="1">
    <source>
        <dbReference type="HAMAP-Rule" id="MF_00297"/>
    </source>
</evidence>
<accession>A1KNJ7</accession>
<proteinExistence type="inferred from homology"/>
<comment type="function">
    <text evidence="1">mRNA decapping enzyme that specifically removes the nicotinamide adenine dinucleotide (NAD) cap from a subset of mRNAs by hydrolyzing the diphosphate linkage to produce nicotinamide mononucleotide (NMN) and 5' monophosphate mRNA. The NAD-cap is present at the 5'-end of some mRNAs and stabilizes RNA against 5'-processing. Has preference for mRNAs with a 5'-end purine. Catalyzes the hydrolysis of a broad range of dinucleotide pyrophosphates.</text>
</comment>
<comment type="catalytic activity">
    <reaction evidence="1">
        <text>a 5'-end NAD(+)-phospho-ribonucleoside in mRNA + H2O = a 5'-end phospho-adenosine-phospho-ribonucleoside in mRNA + beta-nicotinamide D-ribonucleotide + 2 H(+)</text>
        <dbReference type="Rhea" id="RHEA:60876"/>
        <dbReference type="Rhea" id="RHEA-COMP:15698"/>
        <dbReference type="Rhea" id="RHEA-COMP:15719"/>
        <dbReference type="ChEBI" id="CHEBI:14649"/>
        <dbReference type="ChEBI" id="CHEBI:15377"/>
        <dbReference type="ChEBI" id="CHEBI:15378"/>
        <dbReference type="ChEBI" id="CHEBI:144029"/>
        <dbReference type="ChEBI" id="CHEBI:144051"/>
    </reaction>
    <physiologicalReaction direction="left-to-right" evidence="1">
        <dbReference type="Rhea" id="RHEA:60877"/>
    </physiologicalReaction>
</comment>
<comment type="catalytic activity">
    <reaction evidence="1">
        <text>NAD(+) + H2O = beta-nicotinamide D-ribonucleotide + AMP + 2 H(+)</text>
        <dbReference type="Rhea" id="RHEA:11800"/>
        <dbReference type="ChEBI" id="CHEBI:14649"/>
        <dbReference type="ChEBI" id="CHEBI:15377"/>
        <dbReference type="ChEBI" id="CHEBI:15378"/>
        <dbReference type="ChEBI" id="CHEBI:57540"/>
        <dbReference type="ChEBI" id="CHEBI:456215"/>
        <dbReference type="EC" id="3.6.1.22"/>
    </reaction>
</comment>
<comment type="catalytic activity">
    <reaction evidence="1">
        <text>NADH + H2O = reduced beta-nicotinamide D-ribonucleotide + AMP + 2 H(+)</text>
        <dbReference type="Rhea" id="RHEA:48868"/>
        <dbReference type="ChEBI" id="CHEBI:15377"/>
        <dbReference type="ChEBI" id="CHEBI:15378"/>
        <dbReference type="ChEBI" id="CHEBI:57945"/>
        <dbReference type="ChEBI" id="CHEBI:90832"/>
        <dbReference type="ChEBI" id="CHEBI:456215"/>
        <dbReference type="EC" id="3.6.1.22"/>
    </reaction>
</comment>
<comment type="cofactor">
    <cofactor evidence="1">
        <name>Mg(2+)</name>
        <dbReference type="ChEBI" id="CHEBI:18420"/>
    </cofactor>
    <cofactor evidence="1">
        <name>Mn(2+)</name>
        <dbReference type="ChEBI" id="CHEBI:29035"/>
    </cofactor>
    <text evidence="1">Divalent metal cations. Mg(2+) or Mn(2+).</text>
</comment>
<comment type="subunit">
    <text evidence="1">Homodimer.</text>
</comment>
<comment type="similarity">
    <text evidence="1">Belongs to the Nudix hydrolase family. NudC subfamily.</text>
</comment>
<keyword id="KW-0378">Hydrolase</keyword>
<keyword id="KW-0460">Magnesium</keyword>
<keyword id="KW-0464">Manganese</keyword>
<keyword id="KW-0479">Metal-binding</keyword>
<keyword id="KW-0520">NAD</keyword>
<sequence>MTNVSGVDFQLRSVPLLSRVGADRADRLRTDMEAAAAGWPGAALLRVDSRNRVLVANGRVLLGAAIELADKPPPEAVFLGRVEGGRHVWAVRAALQPIADPDIPAEAVDLRGLGRIMDDTSSQLVSSASALLNWHDNARFSALDGAPTKPARAGWSRVNPITGHEEFPRIDPAVICLVHDGADRAVLARQAAWPERMFSLLAGFVEAGESFEVCVAREIREEIGLTVRDVRYLGSQPWPFPRSLMVGFHALGDPDEEFSFSDGEIAEAAWFTRDEVRAALAAGDWSSASESKLLLPGSISIARVIIESWAACE</sequence>
<dbReference type="EC" id="3.6.1.-" evidence="1"/>
<dbReference type="EC" id="3.6.1.22" evidence="1"/>
<dbReference type="EMBL" id="AM408590">
    <property type="protein sequence ID" value="CAL73213.1"/>
    <property type="molecule type" value="Genomic_DNA"/>
</dbReference>
<dbReference type="RefSeq" id="WP_003416829.1">
    <property type="nucleotide sequence ID" value="NC_008769.1"/>
</dbReference>
<dbReference type="SMR" id="A1KNJ7"/>
<dbReference type="GeneID" id="45427190"/>
<dbReference type="KEGG" id="mbb:BCG_3224c"/>
<dbReference type="HOGENOM" id="CLU_037162_0_4_11"/>
<dbReference type="Proteomes" id="UP000001472">
    <property type="component" value="Chromosome"/>
</dbReference>
<dbReference type="GO" id="GO:0005829">
    <property type="term" value="C:cytosol"/>
    <property type="evidence" value="ECO:0007669"/>
    <property type="project" value="TreeGrafter"/>
</dbReference>
<dbReference type="GO" id="GO:0000287">
    <property type="term" value="F:magnesium ion binding"/>
    <property type="evidence" value="ECO:0007669"/>
    <property type="project" value="UniProtKB-UniRule"/>
</dbReference>
<dbReference type="GO" id="GO:0030145">
    <property type="term" value="F:manganese ion binding"/>
    <property type="evidence" value="ECO:0007669"/>
    <property type="project" value="UniProtKB-UniRule"/>
</dbReference>
<dbReference type="GO" id="GO:0000210">
    <property type="term" value="F:NAD+ diphosphatase activity"/>
    <property type="evidence" value="ECO:0007669"/>
    <property type="project" value="UniProtKB-UniRule"/>
</dbReference>
<dbReference type="GO" id="GO:0035529">
    <property type="term" value="F:NADH pyrophosphatase activity"/>
    <property type="evidence" value="ECO:0007669"/>
    <property type="project" value="TreeGrafter"/>
</dbReference>
<dbReference type="GO" id="GO:0110153">
    <property type="term" value="F:RNA NAD-cap (NMN-forming) hydrolase activity"/>
    <property type="evidence" value="ECO:0007669"/>
    <property type="project" value="RHEA"/>
</dbReference>
<dbReference type="GO" id="GO:0019677">
    <property type="term" value="P:NAD catabolic process"/>
    <property type="evidence" value="ECO:0007669"/>
    <property type="project" value="TreeGrafter"/>
</dbReference>
<dbReference type="GO" id="GO:0006734">
    <property type="term" value="P:NADH metabolic process"/>
    <property type="evidence" value="ECO:0007669"/>
    <property type="project" value="TreeGrafter"/>
</dbReference>
<dbReference type="GO" id="GO:0006742">
    <property type="term" value="P:NADP catabolic process"/>
    <property type="evidence" value="ECO:0007669"/>
    <property type="project" value="TreeGrafter"/>
</dbReference>
<dbReference type="CDD" id="cd03429">
    <property type="entry name" value="NUDIX_NADH_pyrophosphatase_Nudt13"/>
    <property type="match status" value="1"/>
</dbReference>
<dbReference type="FunFam" id="3.90.79.10:FF:000048">
    <property type="entry name" value="NADH pyrophosphatase"/>
    <property type="match status" value="1"/>
</dbReference>
<dbReference type="Gene3D" id="3.90.79.20">
    <property type="match status" value="1"/>
</dbReference>
<dbReference type="Gene3D" id="3.90.79.10">
    <property type="entry name" value="Nucleoside Triphosphate Pyrophosphohydrolase"/>
    <property type="match status" value="1"/>
</dbReference>
<dbReference type="HAMAP" id="MF_00297">
    <property type="entry name" value="Nudix_NudC"/>
    <property type="match status" value="1"/>
</dbReference>
<dbReference type="InterPro" id="IPR050241">
    <property type="entry name" value="NAD-cap_RNA_hydrolase_NudC"/>
</dbReference>
<dbReference type="InterPro" id="IPR015375">
    <property type="entry name" value="NADH_PPase-like_N"/>
</dbReference>
<dbReference type="InterPro" id="IPR049734">
    <property type="entry name" value="NudC-like_C"/>
</dbReference>
<dbReference type="InterPro" id="IPR015797">
    <property type="entry name" value="NUDIX_hydrolase-like_dom_sf"/>
</dbReference>
<dbReference type="InterPro" id="IPR020084">
    <property type="entry name" value="NUDIX_hydrolase_CS"/>
</dbReference>
<dbReference type="InterPro" id="IPR000086">
    <property type="entry name" value="NUDIX_hydrolase_dom"/>
</dbReference>
<dbReference type="InterPro" id="IPR022925">
    <property type="entry name" value="RNA_Hydrolase_NudC"/>
</dbReference>
<dbReference type="InterPro" id="IPR015376">
    <property type="entry name" value="Znr_NADH_PPase"/>
</dbReference>
<dbReference type="NCBIfam" id="NF001299">
    <property type="entry name" value="PRK00241.1"/>
    <property type="match status" value="1"/>
</dbReference>
<dbReference type="PANTHER" id="PTHR42904:SF6">
    <property type="entry name" value="NAD-CAPPED RNA HYDROLASE NUDT12"/>
    <property type="match status" value="1"/>
</dbReference>
<dbReference type="PANTHER" id="PTHR42904">
    <property type="entry name" value="NUDIX HYDROLASE, NUDC SUBFAMILY"/>
    <property type="match status" value="1"/>
</dbReference>
<dbReference type="Pfam" id="PF00293">
    <property type="entry name" value="NUDIX"/>
    <property type="match status" value="1"/>
</dbReference>
<dbReference type="Pfam" id="PF09296">
    <property type="entry name" value="NUDIX-like"/>
    <property type="match status" value="1"/>
</dbReference>
<dbReference type="Pfam" id="PF09297">
    <property type="entry name" value="Zn_ribbon_NUD"/>
    <property type="match status" value="1"/>
</dbReference>
<dbReference type="SUPFAM" id="SSF55811">
    <property type="entry name" value="Nudix"/>
    <property type="match status" value="1"/>
</dbReference>
<dbReference type="PROSITE" id="PS51462">
    <property type="entry name" value="NUDIX"/>
    <property type="match status" value="1"/>
</dbReference>
<dbReference type="PROSITE" id="PS00893">
    <property type="entry name" value="NUDIX_BOX"/>
    <property type="match status" value="1"/>
</dbReference>